<reference key="1">
    <citation type="journal article" date="2008" name="J. Bacteriol.">
        <title>The complete genome sequence of Escherichia coli DH10B: insights into the biology of a laboratory workhorse.</title>
        <authorList>
            <person name="Durfee T."/>
            <person name="Nelson R."/>
            <person name="Baldwin S."/>
            <person name="Plunkett G. III"/>
            <person name="Burland V."/>
            <person name="Mau B."/>
            <person name="Petrosino J.F."/>
            <person name="Qin X."/>
            <person name="Muzny D.M."/>
            <person name="Ayele M."/>
            <person name="Gibbs R.A."/>
            <person name="Csorgo B."/>
            <person name="Posfai G."/>
            <person name="Weinstock G.M."/>
            <person name="Blattner F.R."/>
        </authorList>
    </citation>
    <scope>NUCLEOTIDE SEQUENCE [LARGE SCALE GENOMIC DNA]</scope>
    <source>
        <strain>K12 / DH10B</strain>
    </source>
</reference>
<gene>
    <name type="primary">yqfB</name>
    <name type="ordered locus">ECDH10B_3074</name>
</gene>
<protein>
    <recommendedName>
        <fullName evidence="2">N(4)-acetylcytidine amidohydrolase</fullName>
        <shortName evidence="2">ac4C amidohydrolase</shortName>
        <ecNumber evidence="2">3.5.1.135</ecNumber>
    </recommendedName>
</protein>
<feature type="chain" id="PRO_1000131786" description="N(4)-acetylcytidine amidohydrolase">
    <location>
        <begin position="1"/>
        <end position="103"/>
    </location>
</feature>
<feature type="domain" description="ASCH" evidence="1">
    <location>
        <begin position="6"/>
        <end position="101"/>
    </location>
</feature>
<feature type="active site" description="Proton acceptor" evidence="2">
    <location>
        <position position="21"/>
    </location>
</feature>
<feature type="active site" description="Nucleophile" evidence="2">
    <location>
        <position position="24"/>
    </location>
</feature>
<feature type="active site" description="Proton donor" evidence="2">
    <location>
        <position position="74"/>
    </location>
</feature>
<proteinExistence type="inferred from homology"/>
<comment type="function">
    <text evidence="2">Catalyzes the hydrolysis of N(4)-acetylcytidine (ac4C).</text>
</comment>
<comment type="catalytic activity">
    <reaction evidence="2">
        <text>N(4)-acetylcytidine + H2O = cytidine + acetate + H(+)</text>
        <dbReference type="Rhea" id="RHEA:62932"/>
        <dbReference type="ChEBI" id="CHEBI:15377"/>
        <dbReference type="ChEBI" id="CHEBI:15378"/>
        <dbReference type="ChEBI" id="CHEBI:17562"/>
        <dbReference type="ChEBI" id="CHEBI:30089"/>
        <dbReference type="ChEBI" id="CHEBI:70989"/>
        <dbReference type="EC" id="3.5.1.135"/>
    </reaction>
</comment>
<comment type="catalytic activity">
    <reaction evidence="2">
        <text>N(4)-acetyl-2'-deoxycytidine + H2O = 2'-deoxycytidine + acetate + H(+)</text>
        <dbReference type="Rhea" id="RHEA:62936"/>
        <dbReference type="ChEBI" id="CHEBI:15377"/>
        <dbReference type="ChEBI" id="CHEBI:15378"/>
        <dbReference type="ChEBI" id="CHEBI:15698"/>
        <dbReference type="ChEBI" id="CHEBI:30089"/>
        <dbReference type="ChEBI" id="CHEBI:146133"/>
        <dbReference type="EC" id="3.5.1.135"/>
    </reaction>
</comment>
<comment type="catalytic activity">
    <reaction evidence="2">
        <text>N(4)-acetylcytosine + H2O = cytosine + acetate + H(+)</text>
        <dbReference type="Rhea" id="RHEA:62940"/>
        <dbReference type="ChEBI" id="CHEBI:15377"/>
        <dbReference type="ChEBI" id="CHEBI:15378"/>
        <dbReference type="ChEBI" id="CHEBI:16040"/>
        <dbReference type="ChEBI" id="CHEBI:30089"/>
        <dbReference type="ChEBI" id="CHEBI:146134"/>
        <dbReference type="EC" id="3.5.1.135"/>
    </reaction>
</comment>
<comment type="similarity">
    <text evidence="2">Belongs to the N(4)-acetylcytidine amidohydrolase family.</text>
</comment>
<sequence>MQPNDITFFQRFQDDILAGRKTITIRDESESHFKTGDVLRVGRFEDDGYFCTIEVTATSTVTLDTLTEKHAEQENMTLTELKKVIADIYPGQTQFYVIEFKCL</sequence>
<organism>
    <name type="scientific">Escherichia coli (strain K12 / DH10B)</name>
    <dbReference type="NCBI Taxonomy" id="316385"/>
    <lineage>
        <taxon>Bacteria</taxon>
        <taxon>Pseudomonadati</taxon>
        <taxon>Pseudomonadota</taxon>
        <taxon>Gammaproteobacteria</taxon>
        <taxon>Enterobacterales</taxon>
        <taxon>Enterobacteriaceae</taxon>
        <taxon>Escherichia</taxon>
    </lineage>
</organism>
<name>AC4CH_ECODH</name>
<dbReference type="EC" id="3.5.1.135" evidence="2"/>
<dbReference type="EMBL" id="CP000948">
    <property type="protein sequence ID" value="ACB04003.1"/>
    <property type="molecule type" value="Genomic_DNA"/>
</dbReference>
<dbReference type="RefSeq" id="WP_001182957.1">
    <property type="nucleotide sequence ID" value="NC_010473.1"/>
</dbReference>
<dbReference type="SMR" id="B1XEI7"/>
<dbReference type="GeneID" id="75173001"/>
<dbReference type="KEGG" id="ecd:ECDH10B_3074"/>
<dbReference type="HOGENOM" id="CLU_152586_0_0_6"/>
<dbReference type="GO" id="GO:0005829">
    <property type="term" value="C:cytosol"/>
    <property type="evidence" value="ECO:0007669"/>
    <property type="project" value="TreeGrafter"/>
</dbReference>
<dbReference type="GO" id="GO:0016813">
    <property type="term" value="F:hydrolase activity, acting on carbon-nitrogen (but not peptide) bonds, in linear amidines"/>
    <property type="evidence" value="ECO:0007669"/>
    <property type="project" value="UniProtKB-UniRule"/>
</dbReference>
<dbReference type="GO" id="GO:0106251">
    <property type="term" value="F:N4-acetylcytidine amidohydrolase activity"/>
    <property type="evidence" value="ECO:0007669"/>
    <property type="project" value="RHEA"/>
</dbReference>
<dbReference type="CDD" id="cd06552">
    <property type="entry name" value="ASCH_yqfb_like"/>
    <property type="match status" value="1"/>
</dbReference>
<dbReference type="FunFam" id="2.30.130.30:FF:000001">
    <property type="entry name" value="UPF0267 protein YqfB"/>
    <property type="match status" value="1"/>
</dbReference>
<dbReference type="Gene3D" id="2.30.130.30">
    <property type="entry name" value="Hypothetical protein"/>
    <property type="match status" value="1"/>
</dbReference>
<dbReference type="HAMAP" id="MF_00684">
    <property type="entry name" value="ac4C_amidohydr"/>
    <property type="match status" value="1"/>
</dbReference>
<dbReference type="InterPro" id="IPR008314">
    <property type="entry name" value="AC4CH"/>
</dbReference>
<dbReference type="InterPro" id="IPR007374">
    <property type="entry name" value="ASCH_domain"/>
</dbReference>
<dbReference type="InterPro" id="IPR015947">
    <property type="entry name" value="PUA-like_sf"/>
</dbReference>
<dbReference type="NCBIfam" id="NF003443">
    <property type="entry name" value="PRK04980.1"/>
    <property type="match status" value="1"/>
</dbReference>
<dbReference type="PANTHER" id="PTHR38088">
    <property type="entry name" value="UCP029143 FAMILY PROTEIN"/>
    <property type="match status" value="1"/>
</dbReference>
<dbReference type="PANTHER" id="PTHR38088:SF2">
    <property type="entry name" value="UCP029143 FAMILY PROTEIN"/>
    <property type="match status" value="1"/>
</dbReference>
<dbReference type="Pfam" id="PF04266">
    <property type="entry name" value="ASCH"/>
    <property type="match status" value="1"/>
</dbReference>
<dbReference type="PIRSF" id="PIRSF029143">
    <property type="entry name" value="UCP029143"/>
    <property type="match status" value="1"/>
</dbReference>
<dbReference type="SMART" id="SM01022">
    <property type="entry name" value="ASCH"/>
    <property type="match status" value="1"/>
</dbReference>
<dbReference type="SUPFAM" id="SSF88697">
    <property type="entry name" value="PUA domain-like"/>
    <property type="match status" value="1"/>
</dbReference>
<evidence type="ECO:0000255" key="1"/>
<evidence type="ECO:0000255" key="2">
    <source>
        <dbReference type="HAMAP-Rule" id="MF_00684"/>
    </source>
</evidence>
<accession>B1XEI7</accession>
<keyword id="KW-0378">Hydrolase</keyword>